<name>ISPG_HISS2</name>
<protein>
    <recommendedName>
        <fullName evidence="1">4-hydroxy-3-methylbut-2-en-1-yl diphosphate synthase (flavodoxin)</fullName>
        <ecNumber evidence="1">1.17.7.3</ecNumber>
    </recommendedName>
    <alternativeName>
        <fullName evidence="1">1-hydroxy-2-methyl-2-(E)-butenyl 4-diphosphate synthase</fullName>
    </alternativeName>
</protein>
<sequence>MSSFKPTINRRQSTKIYVGNVPIGGDAPIAVQSMTNTRTTDIEATVAQIKALERVGADIVRISVPTMDAAEAFKSIKQQVNIPLVADIHFDYRIALKVAEYGVDCLRINPGNIGREDRIRAVVDCAKDKNIPIRIGVNAGSLEKDLQEKYGEPTPEALLESALRHVEILDRLNFDQFKVSVKASDVFLAVESYRLLAKAIKQPLHLGITEAGGARAGAVKSAVGLGMLLAEGIGDTLRVSLAADPVEEIKVGFDILKSLRIRSHGINFIACPTCSRQEFDVIGTVNALEQRLEDIVTPMDVSIIGCVVNGPGEALISDLGVTGGNKKSGYYLDGKRQKERFDNEDLINQLEAKIRAKVAQQDPKNRII</sequence>
<organism>
    <name type="scientific">Histophilus somni (strain 2336)</name>
    <name type="common">Haemophilus somnus</name>
    <dbReference type="NCBI Taxonomy" id="228400"/>
    <lineage>
        <taxon>Bacteria</taxon>
        <taxon>Pseudomonadati</taxon>
        <taxon>Pseudomonadota</taxon>
        <taxon>Gammaproteobacteria</taxon>
        <taxon>Pasteurellales</taxon>
        <taxon>Pasteurellaceae</taxon>
        <taxon>Histophilus</taxon>
    </lineage>
</organism>
<dbReference type="EC" id="1.17.7.3" evidence="1"/>
<dbReference type="EMBL" id="CP000947">
    <property type="protein sequence ID" value="ACA32395.1"/>
    <property type="molecule type" value="Genomic_DNA"/>
</dbReference>
<dbReference type="RefSeq" id="WP_011608560.1">
    <property type="nucleotide sequence ID" value="NC_010519.1"/>
</dbReference>
<dbReference type="SMR" id="B0USG8"/>
<dbReference type="STRING" id="228400.HSM_0729"/>
<dbReference type="GeneID" id="31487015"/>
<dbReference type="KEGG" id="hsm:HSM_0729"/>
<dbReference type="HOGENOM" id="CLU_042258_0_0_6"/>
<dbReference type="UniPathway" id="UPA00056">
    <property type="reaction ID" value="UER00096"/>
</dbReference>
<dbReference type="GO" id="GO:0051539">
    <property type="term" value="F:4 iron, 4 sulfur cluster binding"/>
    <property type="evidence" value="ECO:0007669"/>
    <property type="project" value="UniProtKB-UniRule"/>
</dbReference>
<dbReference type="GO" id="GO:0046429">
    <property type="term" value="F:4-hydroxy-3-methylbut-2-en-1-yl diphosphate synthase activity (ferredoxin)"/>
    <property type="evidence" value="ECO:0007669"/>
    <property type="project" value="UniProtKB-UniRule"/>
</dbReference>
<dbReference type="GO" id="GO:0141197">
    <property type="term" value="F:4-hydroxy-3-methylbut-2-enyl-diphosphate synthase activity (flavodoxin)"/>
    <property type="evidence" value="ECO:0007669"/>
    <property type="project" value="UniProtKB-EC"/>
</dbReference>
<dbReference type="GO" id="GO:0005506">
    <property type="term" value="F:iron ion binding"/>
    <property type="evidence" value="ECO:0007669"/>
    <property type="project" value="InterPro"/>
</dbReference>
<dbReference type="GO" id="GO:0019288">
    <property type="term" value="P:isopentenyl diphosphate biosynthetic process, methylerythritol 4-phosphate pathway"/>
    <property type="evidence" value="ECO:0007669"/>
    <property type="project" value="UniProtKB-UniRule"/>
</dbReference>
<dbReference type="GO" id="GO:0016114">
    <property type="term" value="P:terpenoid biosynthetic process"/>
    <property type="evidence" value="ECO:0007669"/>
    <property type="project" value="InterPro"/>
</dbReference>
<dbReference type="FunFam" id="3.20.20.20:FF:000001">
    <property type="entry name" value="4-hydroxy-3-methylbut-2-en-1-yl diphosphate synthase (flavodoxin)"/>
    <property type="match status" value="1"/>
</dbReference>
<dbReference type="FunFam" id="3.30.413.10:FF:000002">
    <property type="entry name" value="4-hydroxy-3-methylbut-2-en-1-yl diphosphate synthase (flavodoxin)"/>
    <property type="match status" value="1"/>
</dbReference>
<dbReference type="Gene3D" id="3.20.20.20">
    <property type="entry name" value="Dihydropteroate synthase-like"/>
    <property type="match status" value="1"/>
</dbReference>
<dbReference type="Gene3D" id="3.30.413.10">
    <property type="entry name" value="Sulfite Reductase Hemoprotein, domain 1"/>
    <property type="match status" value="1"/>
</dbReference>
<dbReference type="HAMAP" id="MF_00159">
    <property type="entry name" value="IspG"/>
    <property type="match status" value="1"/>
</dbReference>
<dbReference type="InterPro" id="IPR011005">
    <property type="entry name" value="Dihydropteroate_synth-like_sf"/>
</dbReference>
<dbReference type="InterPro" id="IPR016425">
    <property type="entry name" value="IspG_bac"/>
</dbReference>
<dbReference type="InterPro" id="IPR004588">
    <property type="entry name" value="IspG_bac-typ"/>
</dbReference>
<dbReference type="InterPro" id="IPR045854">
    <property type="entry name" value="NO2/SO3_Rdtase_4Fe4S_sf"/>
</dbReference>
<dbReference type="NCBIfam" id="TIGR00612">
    <property type="entry name" value="ispG_gcpE"/>
    <property type="match status" value="1"/>
</dbReference>
<dbReference type="NCBIfam" id="NF001540">
    <property type="entry name" value="PRK00366.1"/>
    <property type="match status" value="1"/>
</dbReference>
<dbReference type="PANTHER" id="PTHR30454">
    <property type="entry name" value="4-HYDROXY-3-METHYLBUT-2-EN-1-YL DIPHOSPHATE SYNTHASE"/>
    <property type="match status" value="1"/>
</dbReference>
<dbReference type="PANTHER" id="PTHR30454:SF0">
    <property type="entry name" value="4-HYDROXY-3-METHYLBUT-2-EN-1-YL DIPHOSPHATE SYNTHASE (FERREDOXIN), CHLOROPLASTIC"/>
    <property type="match status" value="1"/>
</dbReference>
<dbReference type="Pfam" id="PF04551">
    <property type="entry name" value="GcpE"/>
    <property type="match status" value="1"/>
</dbReference>
<dbReference type="PIRSF" id="PIRSF004640">
    <property type="entry name" value="IspG"/>
    <property type="match status" value="1"/>
</dbReference>
<dbReference type="SUPFAM" id="SSF51717">
    <property type="entry name" value="Dihydropteroate synthetase-like"/>
    <property type="match status" value="1"/>
</dbReference>
<dbReference type="SUPFAM" id="SSF56014">
    <property type="entry name" value="Nitrite and sulphite reductase 4Fe-4S domain-like"/>
    <property type="match status" value="1"/>
</dbReference>
<evidence type="ECO:0000255" key="1">
    <source>
        <dbReference type="HAMAP-Rule" id="MF_00159"/>
    </source>
</evidence>
<accession>B0USG8</accession>
<comment type="function">
    <text evidence="1">Converts 2C-methyl-D-erythritol 2,4-cyclodiphosphate (ME-2,4cPP) into 1-hydroxy-2-methyl-2-(E)-butenyl 4-diphosphate.</text>
</comment>
<comment type="catalytic activity">
    <reaction evidence="1">
        <text>(2E)-4-hydroxy-3-methylbut-2-enyl diphosphate + oxidized [flavodoxin] + H2O + 2 H(+) = 2-C-methyl-D-erythritol 2,4-cyclic diphosphate + reduced [flavodoxin]</text>
        <dbReference type="Rhea" id="RHEA:43604"/>
        <dbReference type="Rhea" id="RHEA-COMP:10622"/>
        <dbReference type="Rhea" id="RHEA-COMP:10623"/>
        <dbReference type="ChEBI" id="CHEBI:15377"/>
        <dbReference type="ChEBI" id="CHEBI:15378"/>
        <dbReference type="ChEBI" id="CHEBI:57618"/>
        <dbReference type="ChEBI" id="CHEBI:58210"/>
        <dbReference type="ChEBI" id="CHEBI:58483"/>
        <dbReference type="ChEBI" id="CHEBI:128753"/>
        <dbReference type="EC" id="1.17.7.3"/>
    </reaction>
</comment>
<comment type="cofactor">
    <cofactor evidence="1">
        <name>[4Fe-4S] cluster</name>
        <dbReference type="ChEBI" id="CHEBI:49883"/>
    </cofactor>
    <text evidence="1">Binds 1 [4Fe-4S] cluster.</text>
</comment>
<comment type="pathway">
    <text evidence="1">Isoprenoid biosynthesis; isopentenyl diphosphate biosynthesis via DXP pathway; isopentenyl diphosphate from 1-deoxy-D-xylulose 5-phosphate: step 5/6.</text>
</comment>
<comment type="similarity">
    <text evidence="1">Belongs to the IspG family.</text>
</comment>
<reference key="1">
    <citation type="submission" date="2008-02" db="EMBL/GenBank/DDBJ databases">
        <title>Complete sequence of Haemophilus somnus 2336.</title>
        <authorList>
            <consortium name="US DOE Joint Genome Institute"/>
            <person name="Siddaramappa S."/>
            <person name="Duncan A.J."/>
            <person name="Challacombe J.F."/>
            <person name="Rainey D."/>
            <person name="Gillaspy A.F."/>
            <person name="Carson M."/>
            <person name="Gipson J."/>
            <person name="Gipson M."/>
            <person name="Bruce D."/>
            <person name="Detter J.C."/>
            <person name="Han C.S."/>
            <person name="Land M."/>
            <person name="Tapia R."/>
            <person name="Thompson L.S."/>
            <person name="Orvis J."/>
            <person name="Zaitshik J."/>
            <person name="Barnes G."/>
            <person name="Brettin T.S."/>
            <person name="Dyer D.W."/>
            <person name="Inzana T.J."/>
        </authorList>
    </citation>
    <scope>NUCLEOTIDE SEQUENCE [LARGE SCALE GENOMIC DNA]</scope>
    <source>
        <strain>2336</strain>
    </source>
</reference>
<keyword id="KW-0004">4Fe-4S</keyword>
<keyword id="KW-0408">Iron</keyword>
<keyword id="KW-0411">Iron-sulfur</keyword>
<keyword id="KW-0414">Isoprene biosynthesis</keyword>
<keyword id="KW-0479">Metal-binding</keyword>
<keyword id="KW-0560">Oxidoreductase</keyword>
<proteinExistence type="inferred from homology"/>
<feature type="chain" id="PRO_1000076886" description="4-hydroxy-3-methylbut-2-en-1-yl diphosphate synthase (flavodoxin)">
    <location>
        <begin position="1"/>
        <end position="368"/>
    </location>
</feature>
<feature type="binding site" evidence="1">
    <location>
        <position position="271"/>
    </location>
    <ligand>
        <name>[4Fe-4S] cluster</name>
        <dbReference type="ChEBI" id="CHEBI:49883"/>
    </ligand>
</feature>
<feature type="binding site" evidence="1">
    <location>
        <position position="274"/>
    </location>
    <ligand>
        <name>[4Fe-4S] cluster</name>
        <dbReference type="ChEBI" id="CHEBI:49883"/>
    </ligand>
</feature>
<feature type="binding site" evidence="1">
    <location>
        <position position="306"/>
    </location>
    <ligand>
        <name>[4Fe-4S] cluster</name>
        <dbReference type="ChEBI" id="CHEBI:49883"/>
    </ligand>
</feature>
<feature type="binding site" evidence="1">
    <location>
        <position position="313"/>
    </location>
    <ligand>
        <name>[4Fe-4S] cluster</name>
        <dbReference type="ChEBI" id="CHEBI:49883"/>
    </ligand>
</feature>
<gene>
    <name evidence="1" type="primary">ispG</name>
    <name type="ordered locus">HSM_0729</name>
</gene>